<dbReference type="EMBL" id="CP000352">
    <property type="protein sequence ID" value="ABF09304.1"/>
    <property type="molecule type" value="Genomic_DNA"/>
</dbReference>
<dbReference type="RefSeq" id="WP_008644813.1">
    <property type="nucleotide sequence ID" value="NC_007973.1"/>
</dbReference>
<dbReference type="SMR" id="Q1LKM2"/>
<dbReference type="STRING" id="266264.Rmet_2427"/>
<dbReference type="GeneID" id="98343534"/>
<dbReference type="KEGG" id="rme:Rmet_2427"/>
<dbReference type="eggNOG" id="COG0236">
    <property type="taxonomic scope" value="Bacteria"/>
</dbReference>
<dbReference type="HOGENOM" id="CLU_108696_5_1_4"/>
<dbReference type="UniPathway" id="UPA00094"/>
<dbReference type="Proteomes" id="UP000002429">
    <property type="component" value="Chromosome"/>
</dbReference>
<dbReference type="GO" id="GO:0005829">
    <property type="term" value="C:cytosol"/>
    <property type="evidence" value="ECO:0007669"/>
    <property type="project" value="TreeGrafter"/>
</dbReference>
<dbReference type="GO" id="GO:0016020">
    <property type="term" value="C:membrane"/>
    <property type="evidence" value="ECO:0007669"/>
    <property type="project" value="GOC"/>
</dbReference>
<dbReference type="GO" id="GO:0000035">
    <property type="term" value="F:acyl binding"/>
    <property type="evidence" value="ECO:0007669"/>
    <property type="project" value="TreeGrafter"/>
</dbReference>
<dbReference type="GO" id="GO:0000036">
    <property type="term" value="F:acyl carrier activity"/>
    <property type="evidence" value="ECO:0007669"/>
    <property type="project" value="UniProtKB-UniRule"/>
</dbReference>
<dbReference type="GO" id="GO:0009245">
    <property type="term" value="P:lipid A biosynthetic process"/>
    <property type="evidence" value="ECO:0007669"/>
    <property type="project" value="TreeGrafter"/>
</dbReference>
<dbReference type="FunFam" id="1.10.1200.10:FF:000001">
    <property type="entry name" value="Acyl carrier protein"/>
    <property type="match status" value="1"/>
</dbReference>
<dbReference type="Gene3D" id="1.10.1200.10">
    <property type="entry name" value="ACP-like"/>
    <property type="match status" value="1"/>
</dbReference>
<dbReference type="HAMAP" id="MF_01217">
    <property type="entry name" value="Acyl_carrier"/>
    <property type="match status" value="1"/>
</dbReference>
<dbReference type="InterPro" id="IPR003231">
    <property type="entry name" value="ACP"/>
</dbReference>
<dbReference type="InterPro" id="IPR036736">
    <property type="entry name" value="ACP-like_sf"/>
</dbReference>
<dbReference type="InterPro" id="IPR009081">
    <property type="entry name" value="PP-bd_ACP"/>
</dbReference>
<dbReference type="InterPro" id="IPR006162">
    <property type="entry name" value="Ppantetheine_attach_site"/>
</dbReference>
<dbReference type="NCBIfam" id="TIGR00517">
    <property type="entry name" value="acyl_carrier"/>
    <property type="match status" value="1"/>
</dbReference>
<dbReference type="NCBIfam" id="NF002148">
    <property type="entry name" value="PRK00982.1-2"/>
    <property type="match status" value="1"/>
</dbReference>
<dbReference type="NCBIfam" id="NF002149">
    <property type="entry name" value="PRK00982.1-3"/>
    <property type="match status" value="1"/>
</dbReference>
<dbReference type="NCBIfam" id="NF002150">
    <property type="entry name" value="PRK00982.1-4"/>
    <property type="match status" value="1"/>
</dbReference>
<dbReference type="NCBIfam" id="NF002151">
    <property type="entry name" value="PRK00982.1-5"/>
    <property type="match status" value="1"/>
</dbReference>
<dbReference type="PANTHER" id="PTHR20863">
    <property type="entry name" value="ACYL CARRIER PROTEIN"/>
    <property type="match status" value="1"/>
</dbReference>
<dbReference type="PANTHER" id="PTHR20863:SF76">
    <property type="entry name" value="CARRIER DOMAIN-CONTAINING PROTEIN"/>
    <property type="match status" value="1"/>
</dbReference>
<dbReference type="Pfam" id="PF00550">
    <property type="entry name" value="PP-binding"/>
    <property type="match status" value="1"/>
</dbReference>
<dbReference type="SUPFAM" id="SSF47336">
    <property type="entry name" value="ACP-like"/>
    <property type="match status" value="1"/>
</dbReference>
<dbReference type="PROSITE" id="PS50075">
    <property type="entry name" value="CARRIER"/>
    <property type="match status" value="1"/>
</dbReference>
<dbReference type="PROSITE" id="PS00012">
    <property type="entry name" value="PHOSPHOPANTETHEINE"/>
    <property type="match status" value="1"/>
</dbReference>
<proteinExistence type="inferred from homology"/>
<keyword id="KW-0963">Cytoplasm</keyword>
<keyword id="KW-0275">Fatty acid biosynthesis</keyword>
<keyword id="KW-0276">Fatty acid metabolism</keyword>
<keyword id="KW-0444">Lipid biosynthesis</keyword>
<keyword id="KW-0443">Lipid metabolism</keyword>
<keyword id="KW-0596">Phosphopantetheine</keyword>
<keyword id="KW-0597">Phosphoprotein</keyword>
<keyword id="KW-1185">Reference proteome</keyword>
<protein>
    <recommendedName>
        <fullName evidence="1">Acyl carrier protein</fullName>
        <shortName evidence="1">ACP</shortName>
    </recommendedName>
</protein>
<organism>
    <name type="scientific">Cupriavidus metallidurans (strain ATCC 43123 / DSM 2839 / NBRC 102507 / CH34)</name>
    <name type="common">Ralstonia metallidurans</name>
    <dbReference type="NCBI Taxonomy" id="266264"/>
    <lineage>
        <taxon>Bacteria</taxon>
        <taxon>Pseudomonadati</taxon>
        <taxon>Pseudomonadota</taxon>
        <taxon>Betaproteobacteria</taxon>
        <taxon>Burkholderiales</taxon>
        <taxon>Burkholderiaceae</taxon>
        <taxon>Cupriavidus</taxon>
    </lineage>
</organism>
<sequence>MDNIEQRVKKIVAEQLGVAEADIKNESSFVNDLGADSLDTVELVMALEDEFGMEIPDEEAEKITTVQQAIDYATAHVKA</sequence>
<reference key="1">
    <citation type="journal article" date="2010" name="PLoS ONE">
        <title>The complete genome sequence of Cupriavidus metallidurans strain CH34, a master survivalist in harsh and anthropogenic environments.</title>
        <authorList>
            <person name="Janssen P.J."/>
            <person name="Van Houdt R."/>
            <person name="Moors H."/>
            <person name="Monsieurs P."/>
            <person name="Morin N."/>
            <person name="Michaux A."/>
            <person name="Benotmane M.A."/>
            <person name="Leys N."/>
            <person name="Vallaeys T."/>
            <person name="Lapidus A."/>
            <person name="Monchy S."/>
            <person name="Medigue C."/>
            <person name="Taghavi S."/>
            <person name="McCorkle S."/>
            <person name="Dunn J."/>
            <person name="van der Lelie D."/>
            <person name="Mergeay M."/>
        </authorList>
    </citation>
    <scope>NUCLEOTIDE SEQUENCE [LARGE SCALE GENOMIC DNA]</scope>
    <source>
        <strain>ATCC 43123 / DSM 2839 / NBRC 102507 / CH34</strain>
    </source>
</reference>
<gene>
    <name evidence="1" type="primary">acpP</name>
    <name type="ordered locus">Rmet_2427</name>
</gene>
<feature type="chain" id="PRO_1000066668" description="Acyl carrier protein">
    <location>
        <begin position="1"/>
        <end position="79"/>
    </location>
</feature>
<feature type="domain" description="Carrier" evidence="2">
    <location>
        <begin position="2"/>
        <end position="77"/>
    </location>
</feature>
<feature type="modified residue" description="O-(pantetheine 4'-phosphoryl)serine" evidence="2">
    <location>
        <position position="37"/>
    </location>
</feature>
<name>ACP_CUPMC</name>
<accession>Q1LKM2</accession>
<comment type="function">
    <text evidence="1">Carrier of the growing fatty acid chain in fatty acid biosynthesis.</text>
</comment>
<comment type="pathway">
    <text evidence="1">Lipid metabolism; fatty acid biosynthesis.</text>
</comment>
<comment type="subcellular location">
    <subcellularLocation>
        <location evidence="1">Cytoplasm</location>
    </subcellularLocation>
</comment>
<comment type="PTM">
    <text evidence="1">4'-phosphopantetheine is transferred from CoA to a specific serine of apo-ACP by AcpS. This modification is essential for activity because fatty acids are bound in thioester linkage to the sulfhydryl of the prosthetic group.</text>
</comment>
<comment type="similarity">
    <text evidence="1">Belongs to the acyl carrier protein (ACP) family.</text>
</comment>
<evidence type="ECO:0000255" key="1">
    <source>
        <dbReference type="HAMAP-Rule" id="MF_01217"/>
    </source>
</evidence>
<evidence type="ECO:0000255" key="2">
    <source>
        <dbReference type="PROSITE-ProRule" id="PRU00258"/>
    </source>
</evidence>